<accession>P0CQ04</accession>
<accession>Q55QH3</accession>
<accession>Q5KFP3</accession>
<protein>
    <recommendedName>
        <fullName>Plasma membrane fusion protein PRM1</fullName>
    </recommendedName>
</protein>
<organism>
    <name type="scientific">Cryptococcus neoformans var. neoformans serotype D (strain JEC21 / ATCC MYA-565)</name>
    <name type="common">Filobasidiella neoformans</name>
    <dbReference type="NCBI Taxonomy" id="214684"/>
    <lineage>
        <taxon>Eukaryota</taxon>
        <taxon>Fungi</taxon>
        <taxon>Dikarya</taxon>
        <taxon>Basidiomycota</taxon>
        <taxon>Agaricomycotina</taxon>
        <taxon>Tremellomycetes</taxon>
        <taxon>Tremellales</taxon>
        <taxon>Cryptococcaceae</taxon>
        <taxon>Cryptococcus</taxon>
        <taxon>Cryptococcus neoformans species complex</taxon>
    </lineage>
</organism>
<name>PRM1_CRYNJ</name>
<sequence length="1076" mass="117355">MSYPQAPSKFVNPDEIIPLSPPTKPPFAQYAASPLPATPHTPYSPPSPSRLSETIPLRPYLSLLPRILLTFFSPCLLPMILTIAHLIQNRSSTASLATSLKSSVLSACSGLAKAAASIKTLPRYLAMQTNQEAIRATQASILAIGTMLMDAITIIEAVVNFIVDTYRSLLLCTIELAVRGTLEILISAVQTISDAVTDTLNSVRSNIQDDIGDANDIIQTAVSAINRVTTLVNLNISVPEFSIPALSFLQNVTIPTTFEDGLITLNSSLPTLTDLKKKMDEIIDTPFEALISEINSTRLEMAASFNSSILSVPSLSSLSANSANDLSNDLCSDLDTSLIDDTAKALHKLSSIAIGLMFLLLFLIWAALAVWEWRKWKLMKDTVDAVNEEWDRDGKSDAWRMVAIVEHPVLERYSGTFLGKIAKMPRTRTNLRWFLSYLAHPTCLALLFISLFGFLSIQFQLVALNALKAHAQSSANSTVTASTNSLVTKLNAAALNSSQEYADSYNEAIAGYQDRINNELFGSWVNTTAVTLNSTLVEFYDEVEKALNASFGGTILYNPINTFMYCILGSKITNLEKGLTWISEHAFVDLPTFPSDILLLSNDSMNEIATPIAAAAVGSGDGGDDDDGVVGTLISHFESALKVERTFYGIMLGVWLALFLIGLAVVIWNSGGREKFMALRGVPSSSSPPGYGPPESKHPRWKAWLTNNHPIYDSYAEKQFRGTTPTNCLESYTHADVPNVNNGNDDHEKSFFKMRDSHAAGPFGSHATSAVRSTIASLAAPGQSFLKLSGRKLTDTTTPYDDKVPLAPVQTSEKYSRDHANSPFPRPSSESSESSAAQPFWVDKFYGAFEGVKSFFPTRSQRLGAALARKASQRTEGSFGASQVPTARTPGHDWIGGHQCLPEKKAEPEWSMVDPRMLGRALEDDKGRYPRVLPPSEMAAANYNPHPVYPRPMSRASTLGEGMVIPSTTSHPDPFQDMPPLPPKHKRASMDYVEEYESSHSRSSREDSRHGGVTSPASSSVSYFAAEPQLVSASKVQVGVAQKGGQATRALAEIVKELQEKRERKDPFGDDYERGL</sequence>
<dbReference type="EMBL" id="AE017346">
    <property type="protein sequence ID" value="AAW44262.2"/>
    <property type="molecule type" value="Genomic_DNA"/>
</dbReference>
<dbReference type="RefSeq" id="XP_571569.1">
    <property type="nucleotide sequence ID" value="XM_571569.1"/>
</dbReference>
<dbReference type="FunCoup" id="P0CQ04">
    <property type="interactions" value="2"/>
</dbReference>
<dbReference type="STRING" id="214684.P0CQ04"/>
<dbReference type="GlyCosmos" id="P0CQ04">
    <property type="glycosylation" value="11 sites, No reported glycans"/>
</dbReference>
<dbReference type="PaxDb" id="214684-P0CQ04"/>
<dbReference type="EnsemblFungi" id="AAW44262">
    <property type="protein sequence ID" value="AAW44262"/>
    <property type="gene ID" value="CNF01070"/>
</dbReference>
<dbReference type="GeneID" id="3258038"/>
<dbReference type="VEuPathDB" id="FungiDB:CNF01070"/>
<dbReference type="eggNOG" id="ENOG502QRP5">
    <property type="taxonomic scope" value="Eukaryota"/>
</dbReference>
<dbReference type="InParanoid" id="P0CQ04"/>
<dbReference type="OrthoDB" id="10248838at2759"/>
<dbReference type="Proteomes" id="UP000002149">
    <property type="component" value="Chromosome 6"/>
</dbReference>
<dbReference type="GO" id="GO:0043332">
    <property type="term" value="C:mating projection tip"/>
    <property type="evidence" value="ECO:0000318"/>
    <property type="project" value="GO_Central"/>
</dbReference>
<dbReference type="GO" id="GO:0005886">
    <property type="term" value="C:plasma membrane"/>
    <property type="evidence" value="ECO:0007669"/>
    <property type="project" value="UniProtKB-SubCell"/>
</dbReference>
<dbReference type="GO" id="GO:0032220">
    <property type="term" value="P:plasma membrane fusion involved in cytogamy"/>
    <property type="evidence" value="ECO:0000318"/>
    <property type="project" value="GO_Central"/>
</dbReference>
<dbReference type="InterPro" id="IPR026777">
    <property type="entry name" value="PRM1"/>
</dbReference>
<dbReference type="PANTHER" id="PTHR31030">
    <property type="entry name" value="PLASMA MEMBRANE FUSION PROTEIN PRM1"/>
    <property type="match status" value="1"/>
</dbReference>
<dbReference type="PANTHER" id="PTHR31030:SF1">
    <property type="entry name" value="PLASMA MEMBRANE FUSION PROTEIN PRM1"/>
    <property type="match status" value="1"/>
</dbReference>
<evidence type="ECO:0000250" key="1"/>
<evidence type="ECO:0000255" key="2"/>
<evidence type="ECO:0000256" key="3">
    <source>
        <dbReference type="SAM" id="MobiDB-lite"/>
    </source>
</evidence>
<evidence type="ECO:0000305" key="4"/>
<keyword id="KW-1003">Cell membrane</keyword>
<keyword id="KW-0184">Conjugation</keyword>
<keyword id="KW-0325">Glycoprotein</keyword>
<keyword id="KW-0472">Membrane</keyword>
<keyword id="KW-1185">Reference proteome</keyword>
<keyword id="KW-0812">Transmembrane</keyword>
<keyword id="KW-1133">Transmembrane helix</keyword>
<comment type="function">
    <text evidence="1">Involved in cell fusion during mating by stabilizing the plasma membrane fusion event.</text>
</comment>
<comment type="subcellular location">
    <subcellularLocation>
        <location evidence="1">Cell membrane</location>
        <topology evidence="1">Multi-pass membrane protein</topology>
    </subcellularLocation>
</comment>
<comment type="similarity">
    <text evidence="4">Belongs to the PRM1 family.</text>
</comment>
<gene>
    <name type="primary">PRM1</name>
    <name type="ordered locus">CNF01070</name>
</gene>
<proteinExistence type="inferred from homology"/>
<feature type="chain" id="PRO_0000337279" description="Plasma membrane fusion protein PRM1">
    <location>
        <begin position="1"/>
        <end position="1076"/>
    </location>
</feature>
<feature type="topological domain" description="Extracellular" evidence="1">
    <location>
        <begin position="1"/>
        <end position="66"/>
    </location>
</feature>
<feature type="transmembrane region" description="Helical" evidence="2">
    <location>
        <begin position="67"/>
        <end position="87"/>
    </location>
</feature>
<feature type="topological domain" description="Cytoplasmic" evidence="1">
    <location>
        <begin position="88"/>
        <end position="138"/>
    </location>
</feature>
<feature type="transmembrane region" description="Helical" evidence="2">
    <location>
        <begin position="139"/>
        <end position="159"/>
    </location>
</feature>
<feature type="topological domain" description="Extracellular" evidence="1">
    <location>
        <begin position="160"/>
        <end position="350"/>
    </location>
</feature>
<feature type="transmembrane region" description="Helical" evidence="2">
    <location>
        <begin position="351"/>
        <end position="371"/>
    </location>
</feature>
<feature type="topological domain" description="Cytoplasmic" evidence="1">
    <location>
        <begin position="372"/>
        <end position="432"/>
    </location>
</feature>
<feature type="transmembrane region" description="Helical" evidence="2">
    <location>
        <begin position="433"/>
        <end position="455"/>
    </location>
</feature>
<feature type="topological domain" description="Extracellular" evidence="1">
    <location>
        <begin position="456"/>
        <end position="646"/>
    </location>
</feature>
<feature type="transmembrane region" description="Helical" evidence="2">
    <location>
        <begin position="647"/>
        <end position="667"/>
    </location>
</feature>
<feature type="topological domain" description="Cytoplasmic" evidence="1">
    <location>
        <begin position="668"/>
        <end position="1076"/>
    </location>
</feature>
<feature type="region of interest" description="Disordered" evidence="3">
    <location>
        <begin position="1"/>
        <end position="31"/>
    </location>
</feature>
<feature type="region of interest" description="Disordered" evidence="3">
    <location>
        <begin position="796"/>
        <end position="834"/>
    </location>
</feature>
<feature type="region of interest" description="Disordered" evidence="3">
    <location>
        <begin position="874"/>
        <end position="899"/>
    </location>
</feature>
<feature type="region of interest" description="Disordered" evidence="3">
    <location>
        <begin position="963"/>
        <end position="1020"/>
    </location>
</feature>
<feature type="region of interest" description="Disordered" evidence="3">
    <location>
        <begin position="1057"/>
        <end position="1076"/>
    </location>
</feature>
<feature type="compositionally biased region" description="Polar residues" evidence="3">
    <location>
        <begin position="874"/>
        <end position="886"/>
    </location>
</feature>
<feature type="compositionally biased region" description="Basic and acidic residues" evidence="3">
    <location>
        <begin position="997"/>
        <end position="1010"/>
    </location>
</feature>
<feature type="glycosylation site" description="N-linked (GlcNAc...) asparagine" evidence="2">
    <location>
        <position position="235"/>
    </location>
</feature>
<feature type="glycosylation site" description="N-linked (GlcNAc...) asparagine" evidence="2">
    <location>
        <position position="251"/>
    </location>
</feature>
<feature type="glycosylation site" description="N-linked (GlcNAc...) asparagine" evidence="2">
    <location>
        <position position="266"/>
    </location>
</feature>
<feature type="glycosylation site" description="N-linked (GlcNAc...) asparagine" evidence="2">
    <location>
        <position position="295"/>
    </location>
</feature>
<feature type="glycosylation site" description="N-linked (GlcNAc...) asparagine" evidence="2">
    <location>
        <position position="306"/>
    </location>
</feature>
<feature type="glycosylation site" description="N-linked (GlcNAc...) asparagine" evidence="2">
    <location>
        <position position="476"/>
    </location>
</feature>
<feature type="glycosylation site" description="N-linked (GlcNAc...) asparagine" evidence="2">
    <location>
        <position position="496"/>
    </location>
</feature>
<feature type="glycosylation site" description="N-linked (GlcNAc...) asparagine" evidence="2">
    <location>
        <position position="526"/>
    </location>
</feature>
<feature type="glycosylation site" description="N-linked (GlcNAc...) asparagine" evidence="2">
    <location>
        <position position="533"/>
    </location>
</feature>
<feature type="glycosylation site" description="N-linked (GlcNAc...) asparagine" evidence="2">
    <location>
        <position position="548"/>
    </location>
</feature>
<feature type="glycosylation site" description="N-linked (GlcNAc...) asparagine" evidence="2">
    <location>
        <position position="602"/>
    </location>
</feature>
<reference key="1">
    <citation type="journal article" date="2005" name="Science">
        <title>The genome of the basidiomycetous yeast and human pathogen Cryptococcus neoformans.</title>
        <authorList>
            <person name="Loftus B.J."/>
            <person name="Fung E."/>
            <person name="Roncaglia P."/>
            <person name="Rowley D."/>
            <person name="Amedeo P."/>
            <person name="Bruno D."/>
            <person name="Vamathevan J."/>
            <person name="Miranda M."/>
            <person name="Anderson I.J."/>
            <person name="Fraser J.A."/>
            <person name="Allen J.E."/>
            <person name="Bosdet I.E."/>
            <person name="Brent M.R."/>
            <person name="Chiu R."/>
            <person name="Doering T.L."/>
            <person name="Donlin M.J."/>
            <person name="D'Souza C.A."/>
            <person name="Fox D.S."/>
            <person name="Grinberg V."/>
            <person name="Fu J."/>
            <person name="Fukushima M."/>
            <person name="Haas B.J."/>
            <person name="Huang J.C."/>
            <person name="Janbon G."/>
            <person name="Jones S.J.M."/>
            <person name="Koo H.L."/>
            <person name="Krzywinski M.I."/>
            <person name="Kwon-Chung K.J."/>
            <person name="Lengeler K.B."/>
            <person name="Maiti R."/>
            <person name="Marra M.A."/>
            <person name="Marra R.E."/>
            <person name="Mathewson C.A."/>
            <person name="Mitchell T.G."/>
            <person name="Pertea M."/>
            <person name="Riggs F.R."/>
            <person name="Salzberg S.L."/>
            <person name="Schein J.E."/>
            <person name="Shvartsbeyn A."/>
            <person name="Shin H."/>
            <person name="Shumway M."/>
            <person name="Specht C.A."/>
            <person name="Suh B.B."/>
            <person name="Tenney A."/>
            <person name="Utterback T.R."/>
            <person name="Wickes B.L."/>
            <person name="Wortman J.R."/>
            <person name="Wye N.H."/>
            <person name="Kronstad J.W."/>
            <person name="Lodge J.K."/>
            <person name="Heitman J."/>
            <person name="Davis R.W."/>
            <person name="Fraser C.M."/>
            <person name="Hyman R.W."/>
        </authorList>
    </citation>
    <scope>NUCLEOTIDE SEQUENCE [LARGE SCALE GENOMIC DNA]</scope>
    <source>
        <strain>JEC21 / ATCC MYA-565</strain>
    </source>
</reference>